<organism>
    <name type="scientific">Porphyromonas gingivalis (strain ATCC BAA-308 / W83)</name>
    <dbReference type="NCBI Taxonomy" id="242619"/>
    <lineage>
        <taxon>Bacteria</taxon>
        <taxon>Pseudomonadati</taxon>
        <taxon>Bacteroidota</taxon>
        <taxon>Bacteroidia</taxon>
        <taxon>Bacteroidales</taxon>
        <taxon>Porphyromonadaceae</taxon>
        <taxon>Porphyromonas</taxon>
    </lineage>
</organism>
<proteinExistence type="inferred from homology"/>
<sequence>MTEEFDIRQERYRGNDGEREVENKLRPLTFDSFSGQDKVVENLSIFVAAARLRGEALDHTLLHGPPGLGKTTLSNIIANELGVGLKITSGPVLDKPGDLAGLLSSLESNDVLFIDEIHRLSPVVEEYLYSAMEDYRIDIMLDKGPSARSIQINLSPFTLVGATTRSGLLTAPLRARFGINLHLEYYDVHTITGIVERSARILEVSCSHDAAVEIAGRSRGTPRIANALLRRVRDFAQVKGSGAIDKPIACYALEALNIDRYGLDNVDHKLLATIIDKFAGGPVGLSTIATALGEDPGTIEEVYEPFLIKEGFLKRTPRGREVTELAYTHLGRNPRPHRPSLFD</sequence>
<keyword id="KW-0067">ATP-binding</keyword>
<keyword id="KW-0963">Cytoplasm</keyword>
<keyword id="KW-0227">DNA damage</keyword>
<keyword id="KW-0233">DNA recombination</keyword>
<keyword id="KW-0234">DNA repair</keyword>
<keyword id="KW-0238">DNA-binding</keyword>
<keyword id="KW-0378">Hydrolase</keyword>
<keyword id="KW-0547">Nucleotide-binding</keyword>
<keyword id="KW-1185">Reference proteome</keyword>
<gene>
    <name evidence="1" type="primary">ruvB</name>
    <name type="ordered locus">PG_0488</name>
</gene>
<accession>Q7MWU9</accession>
<name>RUVB_PORGI</name>
<comment type="function">
    <text evidence="1">The RuvA-RuvB-RuvC complex processes Holliday junction (HJ) DNA during genetic recombination and DNA repair, while the RuvA-RuvB complex plays an important role in the rescue of blocked DNA replication forks via replication fork reversal (RFR). RuvA specifically binds to HJ cruciform DNA, conferring on it an open structure. The RuvB hexamer acts as an ATP-dependent pump, pulling dsDNA into and through the RuvAB complex. RuvB forms 2 homohexamers on either side of HJ DNA bound by 1 or 2 RuvA tetramers; 4 subunits per hexamer contact DNA at a time. Coordinated motions by a converter formed by DNA-disengaged RuvB subunits stimulates ATP hydrolysis and nucleotide exchange. Immobilization of the converter enables RuvB to convert the ATP-contained energy into a lever motion, pulling 2 nucleotides of DNA out of the RuvA tetramer per ATP hydrolyzed, thus driving DNA branch migration. The RuvB motors rotate together with the DNA substrate, which together with the progressing nucleotide cycle form the mechanistic basis for DNA recombination by continuous HJ branch migration. Branch migration allows RuvC to scan DNA until it finds its consensus sequence, where it cleaves and resolves cruciform DNA.</text>
</comment>
<comment type="catalytic activity">
    <reaction evidence="1">
        <text>ATP + H2O = ADP + phosphate + H(+)</text>
        <dbReference type="Rhea" id="RHEA:13065"/>
        <dbReference type="ChEBI" id="CHEBI:15377"/>
        <dbReference type="ChEBI" id="CHEBI:15378"/>
        <dbReference type="ChEBI" id="CHEBI:30616"/>
        <dbReference type="ChEBI" id="CHEBI:43474"/>
        <dbReference type="ChEBI" id="CHEBI:456216"/>
    </reaction>
</comment>
<comment type="subunit">
    <text evidence="1">Homohexamer. Forms an RuvA(8)-RuvB(12)-Holliday junction (HJ) complex. HJ DNA is sandwiched between 2 RuvA tetramers; dsDNA enters through RuvA and exits via RuvB. An RuvB hexamer assembles on each DNA strand where it exits the tetramer. Each RuvB hexamer is contacted by two RuvA subunits (via domain III) on 2 adjacent RuvB subunits; this complex drives branch migration. In the full resolvosome a probable DNA-RuvA(4)-RuvB(12)-RuvC(2) complex forms which resolves the HJ.</text>
</comment>
<comment type="subcellular location">
    <subcellularLocation>
        <location evidence="1">Cytoplasm</location>
    </subcellularLocation>
</comment>
<comment type="domain">
    <text evidence="1">Has 3 domains, the large (RuvB-L) and small ATPase (RuvB-S) domains and the C-terminal head (RuvB-H) domain. The head domain binds DNA, while the ATPase domains jointly bind ATP, ADP or are empty depending on the state of the subunit in the translocation cycle. During a single DNA translocation step the structure of each domain remains the same, but their relative positions change.</text>
</comment>
<comment type="similarity">
    <text evidence="1">Belongs to the RuvB family.</text>
</comment>
<protein>
    <recommendedName>
        <fullName evidence="1">Holliday junction branch migration complex subunit RuvB</fullName>
        <ecNumber evidence="1">3.6.4.-</ecNumber>
    </recommendedName>
</protein>
<dbReference type="EC" id="3.6.4.-" evidence="1"/>
<dbReference type="EMBL" id="AE015924">
    <property type="protein sequence ID" value="AAQ65682.1"/>
    <property type="molecule type" value="Genomic_DNA"/>
</dbReference>
<dbReference type="RefSeq" id="WP_010956038.1">
    <property type="nucleotide sequence ID" value="NC_002950.2"/>
</dbReference>
<dbReference type="SMR" id="Q7MWU9"/>
<dbReference type="STRING" id="242619.PG_0488"/>
<dbReference type="EnsemblBacteria" id="AAQ65682">
    <property type="protein sequence ID" value="AAQ65682"/>
    <property type="gene ID" value="PG_0488"/>
</dbReference>
<dbReference type="KEGG" id="pgi:PG_0488"/>
<dbReference type="PATRIC" id="fig|242619.8.peg.449"/>
<dbReference type="eggNOG" id="COG2255">
    <property type="taxonomic scope" value="Bacteria"/>
</dbReference>
<dbReference type="HOGENOM" id="CLU_055599_1_0_10"/>
<dbReference type="BioCyc" id="PGIN242619:G1G02-451-MONOMER"/>
<dbReference type="Proteomes" id="UP000000588">
    <property type="component" value="Chromosome"/>
</dbReference>
<dbReference type="GO" id="GO:0005737">
    <property type="term" value="C:cytoplasm"/>
    <property type="evidence" value="ECO:0007669"/>
    <property type="project" value="UniProtKB-SubCell"/>
</dbReference>
<dbReference type="GO" id="GO:0048476">
    <property type="term" value="C:Holliday junction resolvase complex"/>
    <property type="evidence" value="ECO:0007669"/>
    <property type="project" value="UniProtKB-UniRule"/>
</dbReference>
<dbReference type="GO" id="GO:0005524">
    <property type="term" value="F:ATP binding"/>
    <property type="evidence" value="ECO:0007669"/>
    <property type="project" value="UniProtKB-UniRule"/>
</dbReference>
<dbReference type="GO" id="GO:0016887">
    <property type="term" value="F:ATP hydrolysis activity"/>
    <property type="evidence" value="ECO:0007669"/>
    <property type="project" value="InterPro"/>
</dbReference>
<dbReference type="GO" id="GO:0000400">
    <property type="term" value="F:four-way junction DNA binding"/>
    <property type="evidence" value="ECO:0007669"/>
    <property type="project" value="UniProtKB-UniRule"/>
</dbReference>
<dbReference type="GO" id="GO:0009378">
    <property type="term" value="F:four-way junction helicase activity"/>
    <property type="evidence" value="ECO:0007669"/>
    <property type="project" value="InterPro"/>
</dbReference>
<dbReference type="GO" id="GO:0006310">
    <property type="term" value="P:DNA recombination"/>
    <property type="evidence" value="ECO:0007669"/>
    <property type="project" value="UniProtKB-UniRule"/>
</dbReference>
<dbReference type="GO" id="GO:0006281">
    <property type="term" value="P:DNA repair"/>
    <property type="evidence" value="ECO:0007669"/>
    <property type="project" value="UniProtKB-UniRule"/>
</dbReference>
<dbReference type="CDD" id="cd00009">
    <property type="entry name" value="AAA"/>
    <property type="match status" value="1"/>
</dbReference>
<dbReference type="Gene3D" id="1.10.8.60">
    <property type="match status" value="1"/>
</dbReference>
<dbReference type="Gene3D" id="3.40.50.300">
    <property type="entry name" value="P-loop containing nucleotide triphosphate hydrolases"/>
    <property type="match status" value="1"/>
</dbReference>
<dbReference type="Gene3D" id="1.10.10.10">
    <property type="entry name" value="Winged helix-like DNA-binding domain superfamily/Winged helix DNA-binding domain"/>
    <property type="match status" value="1"/>
</dbReference>
<dbReference type="HAMAP" id="MF_00016">
    <property type="entry name" value="DNA_HJ_migration_RuvB"/>
    <property type="match status" value="1"/>
</dbReference>
<dbReference type="InterPro" id="IPR003593">
    <property type="entry name" value="AAA+_ATPase"/>
</dbReference>
<dbReference type="InterPro" id="IPR041445">
    <property type="entry name" value="AAA_lid_4"/>
</dbReference>
<dbReference type="InterPro" id="IPR004605">
    <property type="entry name" value="DNA_helicase_Holl-junc_RuvB"/>
</dbReference>
<dbReference type="InterPro" id="IPR027417">
    <property type="entry name" value="P-loop_NTPase"/>
</dbReference>
<dbReference type="InterPro" id="IPR008824">
    <property type="entry name" value="RuvB-like_N"/>
</dbReference>
<dbReference type="InterPro" id="IPR008823">
    <property type="entry name" value="RuvB_C"/>
</dbReference>
<dbReference type="InterPro" id="IPR036388">
    <property type="entry name" value="WH-like_DNA-bd_sf"/>
</dbReference>
<dbReference type="InterPro" id="IPR036390">
    <property type="entry name" value="WH_DNA-bd_sf"/>
</dbReference>
<dbReference type="NCBIfam" id="NF000868">
    <property type="entry name" value="PRK00080.1"/>
    <property type="match status" value="1"/>
</dbReference>
<dbReference type="NCBIfam" id="TIGR00635">
    <property type="entry name" value="ruvB"/>
    <property type="match status" value="1"/>
</dbReference>
<dbReference type="PANTHER" id="PTHR42848">
    <property type="match status" value="1"/>
</dbReference>
<dbReference type="PANTHER" id="PTHR42848:SF1">
    <property type="entry name" value="HOLLIDAY JUNCTION BRANCH MIGRATION COMPLEX SUBUNIT RUVB"/>
    <property type="match status" value="1"/>
</dbReference>
<dbReference type="Pfam" id="PF17864">
    <property type="entry name" value="AAA_lid_4"/>
    <property type="match status" value="1"/>
</dbReference>
<dbReference type="Pfam" id="PF05491">
    <property type="entry name" value="RuvB_C"/>
    <property type="match status" value="1"/>
</dbReference>
<dbReference type="Pfam" id="PF05496">
    <property type="entry name" value="RuvB_N"/>
    <property type="match status" value="1"/>
</dbReference>
<dbReference type="SMART" id="SM00382">
    <property type="entry name" value="AAA"/>
    <property type="match status" value="1"/>
</dbReference>
<dbReference type="SUPFAM" id="SSF52540">
    <property type="entry name" value="P-loop containing nucleoside triphosphate hydrolases"/>
    <property type="match status" value="1"/>
</dbReference>
<dbReference type="SUPFAM" id="SSF46785">
    <property type="entry name" value="Winged helix' DNA-binding domain"/>
    <property type="match status" value="1"/>
</dbReference>
<reference key="1">
    <citation type="journal article" date="2003" name="J. Bacteriol.">
        <title>Complete genome sequence of the oral pathogenic bacterium Porphyromonas gingivalis strain W83.</title>
        <authorList>
            <person name="Nelson K.E."/>
            <person name="Fleischmann R.D."/>
            <person name="DeBoy R.T."/>
            <person name="Paulsen I.T."/>
            <person name="Fouts D.E."/>
            <person name="Eisen J.A."/>
            <person name="Daugherty S.C."/>
            <person name="Dodson R.J."/>
            <person name="Durkin A.S."/>
            <person name="Gwinn M.L."/>
            <person name="Haft D.H."/>
            <person name="Kolonay J.F."/>
            <person name="Nelson W.C."/>
            <person name="Mason T.M."/>
            <person name="Tallon L."/>
            <person name="Gray J."/>
            <person name="Granger D."/>
            <person name="Tettelin H."/>
            <person name="Dong H."/>
            <person name="Galvin J.L."/>
            <person name="Duncan M.J."/>
            <person name="Dewhirst F.E."/>
            <person name="Fraser C.M."/>
        </authorList>
    </citation>
    <scope>NUCLEOTIDE SEQUENCE [LARGE SCALE GENOMIC DNA]</scope>
    <source>
        <strain>ATCC BAA-308 / W83</strain>
    </source>
</reference>
<feature type="chain" id="PRO_0000165573" description="Holliday junction branch migration complex subunit RuvB">
    <location>
        <begin position="1"/>
        <end position="343"/>
    </location>
</feature>
<feature type="region of interest" description="Large ATPase domain (RuvB-L)" evidence="1">
    <location>
        <begin position="1"/>
        <end position="186"/>
    </location>
</feature>
<feature type="region of interest" description="Small ATPAse domain (RuvB-S)" evidence="1">
    <location>
        <begin position="187"/>
        <end position="257"/>
    </location>
</feature>
<feature type="region of interest" description="Head domain (RuvB-H)" evidence="1">
    <location>
        <begin position="260"/>
        <end position="343"/>
    </location>
</feature>
<feature type="binding site" evidence="1">
    <location>
        <position position="25"/>
    </location>
    <ligand>
        <name>ATP</name>
        <dbReference type="ChEBI" id="CHEBI:30616"/>
    </ligand>
</feature>
<feature type="binding site" evidence="1">
    <location>
        <position position="26"/>
    </location>
    <ligand>
        <name>ATP</name>
        <dbReference type="ChEBI" id="CHEBI:30616"/>
    </ligand>
</feature>
<feature type="binding site" evidence="1">
    <location>
        <position position="67"/>
    </location>
    <ligand>
        <name>ATP</name>
        <dbReference type="ChEBI" id="CHEBI:30616"/>
    </ligand>
</feature>
<feature type="binding site" evidence="1">
    <location>
        <position position="70"/>
    </location>
    <ligand>
        <name>ATP</name>
        <dbReference type="ChEBI" id="CHEBI:30616"/>
    </ligand>
</feature>
<feature type="binding site" evidence="1">
    <location>
        <position position="71"/>
    </location>
    <ligand>
        <name>ATP</name>
        <dbReference type="ChEBI" id="CHEBI:30616"/>
    </ligand>
</feature>
<feature type="binding site" evidence="1">
    <location>
        <position position="71"/>
    </location>
    <ligand>
        <name>Mg(2+)</name>
        <dbReference type="ChEBI" id="CHEBI:18420"/>
    </ligand>
</feature>
<feature type="binding site" evidence="1">
    <location>
        <position position="72"/>
    </location>
    <ligand>
        <name>ATP</name>
        <dbReference type="ChEBI" id="CHEBI:30616"/>
    </ligand>
</feature>
<feature type="binding site" evidence="1">
    <location>
        <begin position="133"/>
        <end position="135"/>
    </location>
    <ligand>
        <name>ATP</name>
        <dbReference type="ChEBI" id="CHEBI:30616"/>
    </ligand>
</feature>
<feature type="binding site" evidence="1">
    <location>
        <position position="176"/>
    </location>
    <ligand>
        <name>ATP</name>
        <dbReference type="ChEBI" id="CHEBI:30616"/>
    </ligand>
</feature>
<feature type="binding site" evidence="1">
    <location>
        <position position="186"/>
    </location>
    <ligand>
        <name>ATP</name>
        <dbReference type="ChEBI" id="CHEBI:30616"/>
    </ligand>
</feature>
<feature type="binding site" evidence="1">
    <location>
        <position position="223"/>
    </location>
    <ligand>
        <name>ATP</name>
        <dbReference type="ChEBI" id="CHEBI:30616"/>
    </ligand>
</feature>
<feature type="binding site" evidence="1">
    <location>
        <position position="315"/>
    </location>
    <ligand>
        <name>DNA</name>
        <dbReference type="ChEBI" id="CHEBI:16991"/>
    </ligand>
</feature>
<feature type="binding site" evidence="1">
    <location>
        <position position="320"/>
    </location>
    <ligand>
        <name>DNA</name>
        <dbReference type="ChEBI" id="CHEBI:16991"/>
    </ligand>
</feature>
<evidence type="ECO:0000255" key="1">
    <source>
        <dbReference type="HAMAP-Rule" id="MF_00016"/>
    </source>
</evidence>